<proteinExistence type="inferred from homology"/>
<reference key="1">
    <citation type="journal article" date="2005" name="Nucleic Acids Res.">
        <title>Genome dynamics and diversity of Shigella species, the etiologic agents of bacillary dysentery.</title>
        <authorList>
            <person name="Yang F."/>
            <person name="Yang J."/>
            <person name="Zhang X."/>
            <person name="Chen L."/>
            <person name="Jiang Y."/>
            <person name="Yan Y."/>
            <person name="Tang X."/>
            <person name="Wang J."/>
            <person name="Xiong Z."/>
            <person name="Dong J."/>
            <person name="Xue Y."/>
            <person name="Zhu Y."/>
            <person name="Xu X."/>
            <person name="Sun L."/>
            <person name="Chen S."/>
            <person name="Nie H."/>
            <person name="Peng J."/>
            <person name="Xu J."/>
            <person name="Wang Y."/>
            <person name="Yuan Z."/>
            <person name="Wen Y."/>
            <person name="Yao Z."/>
            <person name="Shen Y."/>
            <person name="Qiang B."/>
            <person name="Hou Y."/>
            <person name="Yu J."/>
            <person name="Jin Q."/>
        </authorList>
    </citation>
    <scope>NUCLEOTIDE SEQUENCE [LARGE SCALE GENOMIC DNA]</scope>
    <source>
        <strain>Sd197</strain>
    </source>
</reference>
<accession>Q32CD6</accession>
<sequence length="432" mass="45655">MSKIVKIIGREIIDSRGNPTVEAEVHLEGGFVGMAAAPSGASTGSREALELRDGDKSRFLGKGVTKAVAAVNGPIAQALIGKDAKDQAGIDKIMIDLDGTENKSKFGANAILAVSLANAKAAAAAKGMPLYEHIAELNGTPGKYSMPVPMMNIINGGEHADNNVDIQEFMIQPVGAKTVKEAIRMGSEVFHHLAKVLKAKGMNTAVGDEGGYAPNLGSNAEALAVIAEAVKAAGYELGKDITLAMDCAASEFYKDGKYVLAGEGNKAFTSEEFTHFLEELTKQYPIVSIEDGLDESDWDGFAYQTKVLGDKIQLVGDDLFVTNTKILKEGIEKGIANSILIKFNQIGSLTETLAAIKMAKDAGYTAVISHRSGETEDATIADLAVGTAAGQIKTGSMSRSDRVAKYNQLIRIEEALGEKAPYNGRKEIKGQA</sequence>
<dbReference type="EC" id="4.2.1.11" evidence="2"/>
<dbReference type="EMBL" id="CP000034">
    <property type="protein sequence ID" value="ABB63019.1"/>
    <property type="molecule type" value="Genomic_DNA"/>
</dbReference>
<dbReference type="RefSeq" id="WP_000036723.1">
    <property type="nucleotide sequence ID" value="NC_007606.1"/>
</dbReference>
<dbReference type="RefSeq" id="YP_404510.1">
    <property type="nucleotide sequence ID" value="NC_007606.1"/>
</dbReference>
<dbReference type="SMR" id="Q32CD6"/>
<dbReference type="STRING" id="300267.SDY_2996"/>
<dbReference type="EnsemblBacteria" id="ABB63019">
    <property type="protein sequence ID" value="ABB63019"/>
    <property type="gene ID" value="SDY_2996"/>
</dbReference>
<dbReference type="GeneID" id="93779219"/>
<dbReference type="KEGG" id="sdy:SDY_2996"/>
<dbReference type="PATRIC" id="fig|300267.13.peg.3595"/>
<dbReference type="HOGENOM" id="CLU_031223_2_1_6"/>
<dbReference type="UniPathway" id="UPA00109">
    <property type="reaction ID" value="UER00187"/>
</dbReference>
<dbReference type="Proteomes" id="UP000002716">
    <property type="component" value="Chromosome"/>
</dbReference>
<dbReference type="GO" id="GO:0009986">
    <property type="term" value="C:cell surface"/>
    <property type="evidence" value="ECO:0007669"/>
    <property type="project" value="UniProtKB-SubCell"/>
</dbReference>
<dbReference type="GO" id="GO:0005576">
    <property type="term" value="C:extracellular region"/>
    <property type="evidence" value="ECO:0007669"/>
    <property type="project" value="UniProtKB-SubCell"/>
</dbReference>
<dbReference type="GO" id="GO:0000015">
    <property type="term" value="C:phosphopyruvate hydratase complex"/>
    <property type="evidence" value="ECO:0007669"/>
    <property type="project" value="InterPro"/>
</dbReference>
<dbReference type="GO" id="GO:0000287">
    <property type="term" value="F:magnesium ion binding"/>
    <property type="evidence" value="ECO:0007669"/>
    <property type="project" value="UniProtKB-UniRule"/>
</dbReference>
<dbReference type="GO" id="GO:0004634">
    <property type="term" value="F:phosphopyruvate hydratase activity"/>
    <property type="evidence" value="ECO:0007669"/>
    <property type="project" value="UniProtKB-UniRule"/>
</dbReference>
<dbReference type="GO" id="GO:0006096">
    <property type="term" value="P:glycolytic process"/>
    <property type="evidence" value="ECO:0007669"/>
    <property type="project" value="UniProtKB-UniRule"/>
</dbReference>
<dbReference type="CDD" id="cd03313">
    <property type="entry name" value="enolase"/>
    <property type="match status" value="1"/>
</dbReference>
<dbReference type="FunFam" id="3.20.20.120:FF:000001">
    <property type="entry name" value="Enolase"/>
    <property type="match status" value="1"/>
</dbReference>
<dbReference type="FunFam" id="3.30.390.10:FF:000001">
    <property type="entry name" value="Enolase"/>
    <property type="match status" value="1"/>
</dbReference>
<dbReference type="Gene3D" id="3.20.20.120">
    <property type="entry name" value="Enolase-like C-terminal domain"/>
    <property type="match status" value="1"/>
</dbReference>
<dbReference type="Gene3D" id="3.30.390.10">
    <property type="entry name" value="Enolase-like, N-terminal domain"/>
    <property type="match status" value="1"/>
</dbReference>
<dbReference type="HAMAP" id="MF_00318">
    <property type="entry name" value="Enolase"/>
    <property type="match status" value="1"/>
</dbReference>
<dbReference type="InterPro" id="IPR000941">
    <property type="entry name" value="Enolase"/>
</dbReference>
<dbReference type="InterPro" id="IPR036849">
    <property type="entry name" value="Enolase-like_C_sf"/>
</dbReference>
<dbReference type="InterPro" id="IPR029017">
    <property type="entry name" value="Enolase-like_N"/>
</dbReference>
<dbReference type="InterPro" id="IPR020810">
    <property type="entry name" value="Enolase_C"/>
</dbReference>
<dbReference type="InterPro" id="IPR020809">
    <property type="entry name" value="Enolase_CS"/>
</dbReference>
<dbReference type="InterPro" id="IPR020811">
    <property type="entry name" value="Enolase_N"/>
</dbReference>
<dbReference type="NCBIfam" id="TIGR01060">
    <property type="entry name" value="eno"/>
    <property type="match status" value="1"/>
</dbReference>
<dbReference type="PANTHER" id="PTHR11902">
    <property type="entry name" value="ENOLASE"/>
    <property type="match status" value="1"/>
</dbReference>
<dbReference type="PANTHER" id="PTHR11902:SF1">
    <property type="entry name" value="ENOLASE"/>
    <property type="match status" value="1"/>
</dbReference>
<dbReference type="Pfam" id="PF00113">
    <property type="entry name" value="Enolase_C"/>
    <property type="match status" value="1"/>
</dbReference>
<dbReference type="Pfam" id="PF03952">
    <property type="entry name" value="Enolase_N"/>
    <property type="match status" value="1"/>
</dbReference>
<dbReference type="PIRSF" id="PIRSF001400">
    <property type="entry name" value="Enolase"/>
    <property type="match status" value="1"/>
</dbReference>
<dbReference type="PRINTS" id="PR00148">
    <property type="entry name" value="ENOLASE"/>
</dbReference>
<dbReference type="SFLD" id="SFLDS00001">
    <property type="entry name" value="Enolase"/>
    <property type="match status" value="1"/>
</dbReference>
<dbReference type="SFLD" id="SFLDF00002">
    <property type="entry name" value="enolase"/>
    <property type="match status" value="1"/>
</dbReference>
<dbReference type="SMART" id="SM01192">
    <property type="entry name" value="Enolase_C"/>
    <property type="match status" value="1"/>
</dbReference>
<dbReference type="SMART" id="SM01193">
    <property type="entry name" value="Enolase_N"/>
    <property type="match status" value="1"/>
</dbReference>
<dbReference type="SUPFAM" id="SSF51604">
    <property type="entry name" value="Enolase C-terminal domain-like"/>
    <property type="match status" value="1"/>
</dbReference>
<dbReference type="SUPFAM" id="SSF54826">
    <property type="entry name" value="Enolase N-terminal domain-like"/>
    <property type="match status" value="1"/>
</dbReference>
<dbReference type="PROSITE" id="PS00164">
    <property type="entry name" value="ENOLASE"/>
    <property type="match status" value="1"/>
</dbReference>
<protein>
    <recommendedName>
        <fullName evidence="2">Enolase</fullName>
        <ecNumber evidence="2">4.2.1.11</ecNumber>
    </recommendedName>
    <alternativeName>
        <fullName evidence="2">2-phospho-D-glycerate hydro-lyase</fullName>
    </alternativeName>
    <alternativeName>
        <fullName evidence="2">2-phosphoglycerate dehydratase</fullName>
    </alternativeName>
</protein>
<gene>
    <name evidence="2" type="primary">eno</name>
    <name type="ordered locus">SDY_2996</name>
</gene>
<evidence type="ECO:0000250" key="1"/>
<evidence type="ECO:0000255" key="2">
    <source>
        <dbReference type="HAMAP-Rule" id="MF_00318"/>
    </source>
</evidence>
<keyword id="KW-0963">Cytoplasm</keyword>
<keyword id="KW-0324">Glycolysis</keyword>
<keyword id="KW-0456">Lyase</keyword>
<keyword id="KW-0460">Magnesium</keyword>
<keyword id="KW-0479">Metal-binding</keyword>
<keyword id="KW-1185">Reference proteome</keyword>
<keyword id="KW-0964">Secreted</keyword>
<organism>
    <name type="scientific">Shigella dysenteriae serotype 1 (strain Sd197)</name>
    <dbReference type="NCBI Taxonomy" id="300267"/>
    <lineage>
        <taxon>Bacteria</taxon>
        <taxon>Pseudomonadati</taxon>
        <taxon>Pseudomonadota</taxon>
        <taxon>Gammaproteobacteria</taxon>
        <taxon>Enterobacterales</taxon>
        <taxon>Enterobacteriaceae</taxon>
        <taxon>Shigella</taxon>
    </lineage>
</organism>
<feature type="initiator methionine" description="Removed" evidence="1">
    <location>
        <position position="1"/>
    </location>
</feature>
<feature type="chain" id="PRO_0000267105" description="Enolase">
    <location>
        <begin position="2"/>
        <end position="432"/>
    </location>
</feature>
<feature type="active site" description="Proton donor" evidence="2">
    <location>
        <position position="209"/>
    </location>
</feature>
<feature type="active site" description="Proton acceptor" evidence="2">
    <location>
        <position position="342"/>
    </location>
</feature>
<feature type="binding site" evidence="2">
    <location>
        <position position="167"/>
    </location>
    <ligand>
        <name>(2R)-2-phosphoglycerate</name>
        <dbReference type="ChEBI" id="CHEBI:58289"/>
    </ligand>
</feature>
<feature type="binding site" evidence="2">
    <location>
        <position position="246"/>
    </location>
    <ligand>
        <name>Mg(2+)</name>
        <dbReference type="ChEBI" id="CHEBI:18420"/>
    </ligand>
</feature>
<feature type="binding site" evidence="2">
    <location>
        <position position="290"/>
    </location>
    <ligand>
        <name>Mg(2+)</name>
        <dbReference type="ChEBI" id="CHEBI:18420"/>
    </ligand>
</feature>
<feature type="binding site" evidence="2">
    <location>
        <position position="317"/>
    </location>
    <ligand>
        <name>Mg(2+)</name>
        <dbReference type="ChEBI" id="CHEBI:18420"/>
    </ligand>
</feature>
<feature type="binding site" evidence="2">
    <location>
        <position position="342"/>
    </location>
    <ligand>
        <name>(2R)-2-phosphoglycerate</name>
        <dbReference type="ChEBI" id="CHEBI:58289"/>
    </ligand>
</feature>
<feature type="binding site" evidence="2">
    <location>
        <position position="371"/>
    </location>
    <ligand>
        <name>(2R)-2-phosphoglycerate</name>
        <dbReference type="ChEBI" id="CHEBI:58289"/>
    </ligand>
</feature>
<feature type="binding site" evidence="2">
    <location>
        <position position="372"/>
    </location>
    <ligand>
        <name>(2R)-2-phosphoglycerate</name>
        <dbReference type="ChEBI" id="CHEBI:58289"/>
    </ligand>
</feature>
<feature type="binding site" evidence="2">
    <location>
        <position position="393"/>
    </location>
    <ligand>
        <name>(2R)-2-phosphoglycerate</name>
        <dbReference type="ChEBI" id="CHEBI:58289"/>
    </ligand>
</feature>
<comment type="function">
    <text evidence="2">Catalyzes the reversible conversion of 2-phosphoglycerate (2-PG) into phosphoenolpyruvate (PEP). It is essential for the degradation of carbohydrates via glycolysis.</text>
</comment>
<comment type="catalytic activity">
    <reaction evidence="2">
        <text>(2R)-2-phosphoglycerate = phosphoenolpyruvate + H2O</text>
        <dbReference type="Rhea" id="RHEA:10164"/>
        <dbReference type="ChEBI" id="CHEBI:15377"/>
        <dbReference type="ChEBI" id="CHEBI:58289"/>
        <dbReference type="ChEBI" id="CHEBI:58702"/>
        <dbReference type="EC" id="4.2.1.11"/>
    </reaction>
</comment>
<comment type="cofactor">
    <cofactor evidence="2">
        <name>Mg(2+)</name>
        <dbReference type="ChEBI" id="CHEBI:18420"/>
    </cofactor>
    <text evidence="2">Binds a second Mg(2+) ion via substrate during catalysis.</text>
</comment>
<comment type="pathway">
    <text evidence="2">Carbohydrate degradation; glycolysis; pyruvate from D-glyceraldehyde 3-phosphate: step 4/5.</text>
</comment>
<comment type="subunit">
    <text evidence="2">Component of the RNA degradosome, a multiprotein complex involved in RNA processing and mRNA degradation.</text>
</comment>
<comment type="subcellular location">
    <subcellularLocation>
        <location evidence="2">Cytoplasm</location>
    </subcellularLocation>
    <subcellularLocation>
        <location evidence="2">Secreted</location>
    </subcellularLocation>
    <subcellularLocation>
        <location evidence="2">Cell surface</location>
    </subcellularLocation>
    <text evidence="2">Fractions of enolase are present in both the cytoplasm and on the cell surface.</text>
</comment>
<comment type="similarity">
    <text evidence="2">Belongs to the enolase family.</text>
</comment>
<name>ENO_SHIDS</name>